<evidence type="ECO:0000250" key="1">
    <source>
        <dbReference type="UniProtKB" id="O14880"/>
    </source>
</evidence>
<evidence type="ECO:0000255" key="2"/>
<evidence type="ECO:0000305" key="3"/>
<sequence length="152" mass="16884">MAVLSKEYGFVILTGAASFLMVTHLAINVSKARKKYKVEYPTMYSTDPENGHIFNCIQRAHQNTLEVYPPFLFFLAVGGVYHPRIVSGLGLAWIVGRVLYAYGYYTGEPRKRQRGALSFIALIGLMGTTVCSAFQHLGWVRTGLNSGCKSCH</sequence>
<dbReference type="EC" id="2.5.1.-" evidence="1"/>
<dbReference type="EC" id="1.11.1.-" evidence="1"/>
<dbReference type="EC" id="4.4.1.20" evidence="1"/>
<dbReference type="EMBL" id="BC102190">
    <property type="protein sequence ID" value="AAI02191.1"/>
    <property type="molecule type" value="mRNA"/>
</dbReference>
<dbReference type="RefSeq" id="NP_001030218.1">
    <property type="nucleotide sequence ID" value="NM_001035046.2"/>
</dbReference>
<dbReference type="RefSeq" id="XP_010801016.1">
    <property type="nucleotide sequence ID" value="XM_010802714.3"/>
</dbReference>
<dbReference type="SMR" id="Q3T100"/>
<dbReference type="FunCoup" id="Q3T100">
    <property type="interactions" value="1396"/>
</dbReference>
<dbReference type="STRING" id="9913.ENSBTAP00000013559"/>
<dbReference type="PaxDb" id="9913-ENSBTAP00000013559"/>
<dbReference type="Ensembl" id="ENSBTAT00000013559.6">
    <property type="protein sequence ID" value="ENSBTAP00000013559.6"/>
    <property type="gene ID" value="ENSBTAG00000010265.6"/>
</dbReference>
<dbReference type="GeneID" id="507346"/>
<dbReference type="KEGG" id="bta:507346"/>
<dbReference type="CTD" id="4259"/>
<dbReference type="VEuPathDB" id="HostDB:ENSBTAG00000010265"/>
<dbReference type="VGNC" id="VGNC:31453">
    <property type="gene designation" value="MGST3"/>
</dbReference>
<dbReference type="eggNOG" id="ENOG502S4E5">
    <property type="taxonomic scope" value="Eukaryota"/>
</dbReference>
<dbReference type="GeneTree" id="ENSGT00390000008608"/>
<dbReference type="HOGENOM" id="CLU_110291_1_0_1"/>
<dbReference type="InParanoid" id="Q3T100"/>
<dbReference type="OMA" id="ACQHLGW"/>
<dbReference type="OrthoDB" id="410651at2759"/>
<dbReference type="TreeFam" id="TF105328"/>
<dbReference type="Reactome" id="R-BTA-156590">
    <property type="pathway name" value="Glutathione conjugation"/>
</dbReference>
<dbReference type="Reactome" id="R-BTA-5423646">
    <property type="pathway name" value="Aflatoxin activation and detoxification"/>
</dbReference>
<dbReference type="UniPathway" id="UPA00383"/>
<dbReference type="UniPathway" id="UPA00879"/>
<dbReference type="Proteomes" id="UP000009136">
    <property type="component" value="Chromosome 3"/>
</dbReference>
<dbReference type="Bgee" id="ENSBTAG00000010265">
    <property type="expression patterns" value="Expressed in abomasum and 102 other cell types or tissues"/>
</dbReference>
<dbReference type="GO" id="GO:0005783">
    <property type="term" value="C:endoplasmic reticulum"/>
    <property type="evidence" value="ECO:0000318"/>
    <property type="project" value="GO_Central"/>
</dbReference>
<dbReference type="GO" id="GO:0005741">
    <property type="term" value="C:mitochondrial outer membrane"/>
    <property type="evidence" value="ECO:0000250"/>
    <property type="project" value="UniProtKB"/>
</dbReference>
<dbReference type="GO" id="GO:0005635">
    <property type="term" value="C:nuclear envelope"/>
    <property type="evidence" value="ECO:0000318"/>
    <property type="project" value="GO_Central"/>
</dbReference>
<dbReference type="GO" id="GO:0004602">
    <property type="term" value="F:glutathione peroxidase activity"/>
    <property type="evidence" value="ECO:0000318"/>
    <property type="project" value="GO_Central"/>
</dbReference>
<dbReference type="GO" id="GO:0004364">
    <property type="term" value="F:glutathione transferase activity"/>
    <property type="evidence" value="ECO:0000250"/>
    <property type="project" value="UniProtKB"/>
</dbReference>
<dbReference type="GO" id="GO:0042802">
    <property type="term" value="F:identical protein binding"/>
    <property type="evidence" value="ECO:0007669"/>
    <property type="project" value="Ensembl"/>
</dbReference>
<dbReference type="GO" id="GO:0004464">
    <property type="term" value="F:leukotriene-C4 synthase activity"/>
    <property type="evidence" value="ECO:0007669"/>
    <property type="project" value="Ensembl"/>
</dbReference>
<dbReference type="GO" id="GO:0019369">
    <property type="term" value="P:arachidonate metabolic process"/>
    <property type="evidence" value="ECO:0007669"/>
    <property type="project" value="UniProtKB-UniPathway"/>
</dbReference>
<dbReference type="GO" id="GO:0019370">
    <property type="term" value="P:leukotriene biosynthetic process"/>
    <property type="evidence" value="ECO:0007669"/>
    <property type="project" value="Ensembl"/>
</dbReference>
<dbReference type="GO" id="GO:0006692">
    <property type="term" value="P:prostanoid metabolic process"/>
    <property type="evidence" value="ECO:0000250"/>
    <property type="project" value="UniProtKB"/>
</dbReference>
<dbReference type="FunFam" id="1.20.120.550:FF:000004">
    <property type="entry name" value="Microsomal glutathione S-transferase 3"/>
    <property type="match status" value="1"/>
</dbReference>
<dbReference type="Gene3D" id="1.20.120.550">
    <property type="entry name" value="Membrane associated eicosanoid/glutathione metabolism-like domain"/>
    <property type="match status" value="1"/>
</dbReference>
<dbReference type="InterPro" id="IPR050997">
    <property type="entry name" value="MAPEG"/>
</dbReference>
<dbReference type="InterPro" id="IPR023352">
    <property type="entry name" value="MAPEG-like_dom_sf"/>
</dbReference>
<dbReference type="InterPro" id="IPR001129">
    <property type="entry name" value="Membr-assoc_MAPEG"/>
</dbReference>
<dbReference type="PANTHER" id="PTHR10250:SF26">
    <property type="entry name" value="GLUTATHIONE S-TRANSFERASE 3, MITOCHONDRIAL"/>
    <property type="match status" value="1"/>
</dbReference>
<dbReference type="PANTHER" id="PTHR10250">
    <property type="entry name" value="MICROSOMAL GLUTATHIONE S-TRANSFERASE"/>
    <property type="match status" value="1"/>
</dbReference>
<dbReference type="Pfam" id="PF01124">
    <property type="entry name" value="MAPEG"/>
    <property type="match status" value="1"/>
</dbReference>
<dbReference type="SUPFAM" id="SSF161084">
    <property type="entry name" value="MAPEG domain-like"/>
    <property type="match status" value="1"/>
</dbReference>
<accession>Q3T100</accession>
<proteinExistence type="evidence at transcript level"/>
<protein>
    <recommendedName>
        <fullName evidence="1">Glutathione S-transferase 3, mitochondrial</fullName>
        <ecNumber evidence="1">2.5.1.-</ecNumber>
    </recommendedName>
    <alternativeName>
        <fullName evidence="1">Glutathione peroxidase MGST3</fullName>
        <ecNumber evidence="1">1.11.1.-</ecNumber>
    </alternativeName>
    <alternativeName>
        <fullName evidence="1">LTC4 synthase MGST3</fullName>
        <ecNumber evidence="1">4.4.1.20</ecNumber>
    </alternativeName>
</protein>
<gene>
    <name type="primary">MGST3</name>
</gene>
<reference key="1">
    <citation type="submission" date="2005-08" db="EMBL/GenBank/DDBJ databases">
        <authorList>
            <consortium name="NIH - Mammalian Gene Collection (MGC) project"/>
        </authorList>
    </citation>
    <scope>NUCLEOTIDE SEQUENCE [LARGE SCALE MRNA]</scope>
    <source>
        <strain>Crossbred X Angus</strain>
        <tissue>Ileum</tissue>
    </source>
</reference>
<name>MGST3_BOVIN</name>
<keyword id="KW-0443">Lipid metabolism</keyword>
<keyword id="KW-0449">Lipoprotein</keyword>
<keyword id="KW-0456">Lyase</keyword>
<keyword id="KW-0472">Membrane</keyword>
<keyword id="KW-0496">Mitochondrion</keyword>
<keyword id="KW-1000">Mitochondrion outer membrane</keyword>
<keyword id="KW-0560">Oxidoreductase</keyword>
<keyword id="KW-0564">Palmitate</keyword>
<keyword id="KW-1185">Reference proteome</keyword>
<keyword id="KW-0808">Transferase</keyword>
<keyword id="KW-0812">Transmembrane</keyword>
<keyword id="KW-1133">Transmembrane helix</keyword>
<comment type="function">
    <text evidence="1">Displays both glutathione S-transferase and glutathione peroxidase activities toward oxyeicosanoids. Catalyzes the Michael addition reaction of reduced glutathione (GSH) to electrophilic eicosanoids to form GSH adducts, as part of detoxification or metabolic shunt processes. Mediates GSH conjugation to leukotriene A4 to form the sulfidopeptide leukotriene C4. Metabolizes cyclopentenone prostanoids, specifically mediates GSH addition at C9 within the cyclopentenone ring of 15-deoxy-Delta12,14-prostaglandin J2 (15dPGJ2) to form 15dPGJ2-glutathione. L-cysteine cannot substitute for GSH. Catalyzes the reduction of eicosanoid peroxides to yield eicosanoid hydroxides.</text>
</comment>
<comment type="catalytic activity">
    <reaction evidence="1">
        <text>leukotriene C4 = leukotriene A4 + glutathione</text>
        <dbReference type="Rhea" id="RHEA:17617"/>
        <dbReference type="ChEBI" id="CHEBI:57463"/>
        <dbReference type="ChEBI" id="CHEBI:57925"/>
        <dbReference type="ChEBI" id="CHEBI:57973"/>
        <dbReference type="EC" id="4.4.1.20"/>
    </reaction>
    <physiologicalReaction direction="right-to-left" evidence="1">
        <dbReference type="Rhea" id="RHEA:17619"/>
    </physiologicalReaction>
</comment>
<comment type="catalytic activity">
    <reaction evidence="1">
        <text>15-deoxy-Delta(12,14)-prostaglandin J2 + glutathione = 15-deoxy-Delta(12,14)-prostaglandin J2-S-(R)-glutathione</text>
        <dbReference type="Rhea" id="RHEA:75963"/>
        <dbReference type="ChEBI" id="CHEBI:57925"/>
        <dbReference type="ChEBI" id="CHEBI:85236"/>
        <dbReference type="ChEBI" id="CHEBI:194498"/>
    </reaction>
    <physiologicalReaction direction="left-to-right" evidence="1">
        <dbReference type="Rhea" id="RHEA:75964"/>
    </physiologicalReaction>
</comment>
<comment type="catalytic activity">
    <reaction evidence="1">
        <text>(5S)-hydroperoxy-(6E,8Z,11Z,14Z)-eicosatetraenoate + 2 glutathione = (5S)-hydroxy-(6E,8Z,11Z,14Z)-eicosatetraenoate + glutathione disulfide + H2O</text>
        <dbReference type="Rhea" id="RHEA:48620"/>
        <dbReference type="ChEBI" id="CHEBI:15377"/>
        <dbReference type="ChEBI" id="CHEBI:57450"/>
        <dbReference type="ChEBI" id="CHEBI:57925"/>
        <dbReference type="ChEBI" id="CHEBI:58297"/>
        <dbReference type="ChEBI" id="CHEBI:90632"/>
    </reaction>
    <physiologicalReaction direction="left-to-right" evidence="1">
        <dbReference type="Rhea" id="RHEA:48621"/>
    </physiologicalReaction>
</comment>
<comment type="pathway">
    <text evidence="1">Lipid metabolism; leukotriene C4 biosynthesis.</text>
</comment>
<comment type="pathway">
    <text evidence="1">Lipid metabolism; arachidonate metabolism.</text>
</comment>
<comment type="subcellular location">
    <subcellularLocation>
        <location evidence="1">Mitochondrion outer membrane</location>
        <topology evidence="2">Multi-pass membrane protein</topology>
    </subcellularLocation>
</comment>
<comment type="similarity">
    <text evidence="3">Belongs to the MAPEG family.</text>
</comment>
<organism>
    <name type="scientific">Bos taurus</name>
    <name type="common">Bovine</name>
    <dbReference type="NCBI Taxonomy" id="9913"/>
    <lineage>
        <taxon>Eukaryota</taxon>
        <taxon>Metazoa</taxon>
        <taxon>Chordata</taxon>
        <taxon>Craniata</taxon>
        <taxon>Vertebrata</taxon>
        <taxon>Euteleostomi</taxon>
        <taxon>Mammalia</taxon>
        <taxon>Eutheria</taxon>
        <taxon>Laurasiatheria</taxon>
        <taxon>Artiodactyla</taxon>
        <taxon>Ruminantia</taxon>
        <taxon>Pecora</taxon>
        <taxon>Bovidae</taxon>
        <taxon>Bovinae</taxon>
        <taxon>Bos</taxon>
    </lineage>
</organism>
<feature type="chain" id="PRO_0000246088" description="Glutathione S-transferase 3, mitochondrial">
    <location>
        <begin position="1"/>
        <end position="152"/>
    </location>
</feature>
<feature type="topological domain" description="Mitochondrial intermembrane" evidence="3">
    <location>
        <begin position="1"/>
        <end position="8"/>
    </location>
</feature>
<feature type="transmembrane region" description="Helical" evidence="2">
    <location>
        <begin position="9"/>
        <end position="29"/>
    </location>
</feature>
<feature type="topological domain" description="Cytoplasmic" evidence="3">
    <location>
        <begin position="30"/>
        <end position="70"/>
    </location>
</feature>
<feature type="transmembrane region" description="Helical" evidence="2">
    <location>
        <begin position="71"/>
        <end position="91"/>
    </location>
</feature>
<feature type="topological domain" description="Mitochondrial intermembrane" evidence="3">
    <location>
        <begin position="92"/>
        <end position="119"/>
    </location>
</feature>
<feature type="transmembrane region" description="Helical" evidence="2">
    <location>
        <begin position="120"/>
        <end position="140"/>
    </location>
</feature>
<feature type="topological domain" description="Cytoplasmic" evidence="3">
    <location>
        <begin position="141"/>
        <end position="152"/>
    </location>
</feature>
<feature type="lipid moiety-binding region" description="S-palmitoyl cysteine" evidence="1">
    <location>
        <position position="151"/>
    </location>
</feature>